<dbReference type="EC" id="2.3.2.27" evidence="1"/>
<dbReference type="EMBL" id="AB128049">
    <property type="protein sequence ID" value="BAD69774.1"/>
    <property type="molecule type" value="Genomic_DNA"/>
</dbReference>
<dbReference type="RefSeq" id="NP_001108418.1">
    <property type="nucleotide sequence ID" value="NM_001114946.1"/>
</dbReference>
<dbReference type="SMR" id="Q5TM52"/>
<dbReference type="FunCoup" id="Q5TM52">
    <property type="interactions" value="4"/>
</dbReference>
<dbReference type="STRING" id="9544.ENSMMUP00000015899"/>
<dbReference type="PaxDb" id="9544-ENSMMUP00000015898"/>
<dbReference type="GeneID" id="712215"/>
<dbReference type="KEGG" id="mcc:712215"/>
<dbReference type="CTD" id="80352"/>
<dbReference type="eggNOG" id="KOG2177">
    <property type="taxonomic scope" value="Eukaryota"/>
</dbReference>
<dbReference type="InParanoid" id="Q5TM52"/>
<dbReference type="OrthoDB" id="6270329at2759"/>
<dbReference type="UniPathway" id="UPA00143"/>
<dbReference type="Proteomes" id="UP000006718">
    <property type="component" value="Unassembled WGS sequence"/>
</dbReference>
<dbReference type="GO" id="GO:0005737">
    <property type="term" value="C:cytoplasm"/>
    <property type="evidence" value="ECO:0000318"/>
    <property type="project" value="GO_Central"/>
</dbReference>
<dbReference type="GO" id="GO:0061630">
    <property type="term" value="F:ubiquitin protein ligase activity"/>
    <property type="evidence" value="ECO:0000318"/>
    <property type="project" value="GO_Central"/>
</dbReference>
<dbReference type="GO" id="GO:0008270">
    <property type="term" value="F:zinc ion binding"/>
    <property type="evidence" value="ECO:0007669"/>
    <property type="project" value="UniProtKB-KW"/>
</dbReference>
<dbReference type="GO" id="GO:0045087">
    <property type="term" value="P:innate immune response"/>
    <property type="evidence" value="ECO:0000318"/>
    <property type="project" value="GO_Central"/>
</dbReference>
<dbReference type="CDD" id="cd16592">
    <property type="entry name" value="RING-HC_RNF39"/>
    <property type="match status" value="1"/>
</dbReference>
<dbReference type="CDD" id="cd12888">
    <property type="entry name" value="SPRY_PRY_TRIM7_like"/>
    <property type="match status" value="1"/>
</dbReference>
<dbReference type="Gene3D" id="2.60.120.920">
    <property type="match status" value="1"/>
</dbReference>
<dbReference type="Gene3D" id="3.30.40.10">
    <property type="entry name" value="Zinc/RING finger domain, C3HC4 (zinc finger)"/>
    <property type="match status" value="1"/>
</dbReference>
<dbReference type="InterPro" id="IPR001870">
    <property type="entry name" value="B30.2/SPRY"/>
</dbReference>
<dbReference type="InterPro" id="IPR043136">
    <property type="entry name" value="B30.2/SPRY_sf"/>
</dbReference>
<dbReference type="InterPro" id="IPR003879">
    <property type="entry name" value="Butyrophylin_SPRY"/>
</dbReference>
<dbReference type="InterPro" id="IPR013320">
    <property type="entry name" value="ConA-like_dom_sf"/>
</dbReference>
<dbReference type="InterPro" id="IPR006574">
    <property type="entry name" value="PRY"/>
</dbReference>
<dbReference type="InterPro" id="IPR003877">
    <property type="entry name" value="SPRY_dom"/>
</dbReference>
<dbReference type="InterPro" id="IPR050143">
    <property type="entry name" value="TRIM/RBCC"/>
</dbReference>
<dbReference type="InterPro" id="IPR027370">
    <property type="entry name" value="Znf-RING_euk"/>
</dbReference>
<dbReference type="InterPro" id="IPR001841">
    <property type="entry name" value="Znf_RING"/>
</dbReference>
<dbReference type="InterPro" id="IPR013083">
    <property type="entry name" value="Znf_RING/FYVE/PHD"/>
</dbReference>
<dbReference type="InterPro" id="IPR017907">
    <property type="entry name" value="Znf_RING_CS"/>
</dbReference>
<dbReference type="PANTHER" id="PTHR24103">
    <property type="entry name" value="E3 UBIQUITIN-PROTEIN LIGASE TRIM"/>
    <property type="match status" value="1"/>
</dbReference>
<dbReference type="Pfam" id="PF13765">
    <property type="entry name" value="PRY"/>
    <property type="match status" value="1"/>
</dbReference>
<dbReference type="Pfam" id="PF00622">
    <property type="entry name" value="SPRY"/>
    <property type="match status" value="1"/>
</dbReference>
<dbReference type="Pfam" id="PF13445">
    <property type="entry name" value="zf-RING_UBOX"/>
    <property type="match status" value="1"/>
</dbReference>
<dbReference type="PRINTS" id="PR01407">
    <property type="entry name" value="BUTYPHLNCDUF"/>
</dbReference>
<dbReference type="SMART" id="SM00589">
    <property type="entry name" value="PRY"/>
    <property type="match status" value="1"/>
</dbReference>
<dbReference type="SMART" id="SM00184">
    <property type="entry name" value="RING"/>
    <property type="match status" value="1"/>
</dbReference>
<dbReference type="SMART" id="SM00449">
    <property type="entry name" value="SPRY"/>
    <property type="match status" value="1"/>
</dbReference>
<dbReference type="SUPFAM" id="SSF49899">
    <property type="entry name" value="Concanavalin A-like lectins/glucanases"/>
    <property type="match status" value="1"/>
</dbReference>
<dbReference type="SUPFAM" id="SSF57850">
    <property type="entry name" value="RING/U-box"/>
    <property type="match status" value="1"/>
</dbReference>
<dbReference type="PROSITE" id="PS50188">
    <property type="entry name" value="B302_SPRY"/>
    <property type="match status" value="1"/>
</dbReference>
<dbReference type="PROSITE" id="PS00518">
    <property type="entry name" value="ZF_RING_1"/>
    <property type="match status" value="1"/>
</dbReference>
<dbReference type="PROSITE" id="PS50089">
    <property type="entry name" value="ZF_RING_2"/>
    <property type="match status" value="1"/>
</dbReference>
<gene>
    <name type="primary">RNF39</name>
</gene>
<feature type="chain" id="PRO_0000056081" description="RING finger protein 39">
    <location>
        <begin position="1"/>
        <end position="420"/>
    </location>
</feature>
<feature type="domain" description="B30.2/SPRY" evidence="3">
    <location>
        <begin position="210"/>
        <end position="420"/>
    </location>
</feature>
<feature type="zinc finger region" description="RING-type" evidence="2">
    <location>
        <begin position="88"/>
        <end position="135"/>
    </location>
</feature>
<feature type="region of interest" description="Disordered" evidence="4">
    <location>
        <begin position="166"/>
        <end position="186"/>
    </location>
</feature>
<feature type="region of interest" description="Disordered" evidence="4">
    <location>
        <begin position="246"/>
        <end position="265"/>
    </location>
</feature>
<organism>
    <name type="scientific">Macaca mulatta</name>
    <name type="common">Rhesus macaque</name>
    <dbReference type="NCBI Taxonomy" id="9544"/>
    <lineage>
        <taxon>Eukaryota</taxon>
        <taxon>Metazoa</taxon>
        <taxon>Chordata</taxon>
        <taxon>Craniata</taxon>
        <taxon>Vertebrata</taxon>
        <taxon>Euteleostomi</taxon>
        <taxon>Mammalia</taxon>
        <taxon>Eutheria</taxon>
        <taxon>Euarchontoglires</taxon>
        <taxon>Primates</taxon>
        <taxon>Haplorrhini</taxon>
        <taxon>Catarrhini</taxon>
        <taxon>Cercopithecidae</taxon>
        <taxon>Cercopithecinae</taxon>
        <taxon>Macaca</taxon>
    </lineage>
</organism>
<proteinExistence type="inferred from homology"/>
<reference key="1">
    <citation type="journal article" date="2004" name="Mol. Biol. Evol.">
        <title>Rhesus macaque class I duplicon structures, organization, and evolution within the alpha block of the major histocompatibility complex.</title>
        <authorList>
            <person name="Kulski J.K."/>
            <person name="Anzai T."/>
            <person name="Shiina T."/>
            <person name="Inoko H."/>
        </authorList>
    </citation>
    <scope>NUCLEOTIDE SEQUENCE [LARGE SCALE GENOMIC DNA]</scope>
</reference>
<evidence type="ECO:0000250" key="1">
    <source>
        <dbReference type="UniProtKB" id="Q9H2S5"/>
    </source>
</evidence>
<evidence type="ECO:0000255" key="2">
    <source>
        <dbReference type="PROSITE-ProRule" id="PRU00175"/>
    </source>
</evidence>
<evidence type="ECO:0000255" key="3">
    <source>
        <dbReference type="PROSITE-ProRule" id="PRU00548"/>
    </source>
</evidence>
<evidence type="ECO:0000256" key="4">
    <source>
        <dbReference type="SAM" id="MobiDB-lite"/>
    </source>
</evidence>
<accession>Q5TM52</accession>
<name>RNF39_MACMU</name>
<keyword id="KW-0963">Cytoplasm</keyword>
<keyword id="KW-0479">Metal-binding</keyword>
<keyword id="KW-1185">Reference proteome</keyword>
<keyword id="KW-0808">Transferase</keyword>
<keyword id="KW-0862">Zinc</keyword>
<keyword id="KW-0863">Zinc-finger</keyword>
<comment type="function">
    <text evidence="1">Plays an inhibitory role in anti-RNA viral innate immunity by targeting the adapter DDX3X and promoting its 'Lys-48'-linked polyubiquitination. Alternatively, enhances the cGAS-STING pathway activation by promoting 'Lys-63'-linked ubiquitination of STING1, facilitating the STING1-TBK1 complex formation and STING1 activation.</text>
</comment>
<comment type="catalytic activity">
    <reaction evidence="1">
        <text>S-ubiquitinyl-[E2 ubiquitin-conjugating enzyme]-L-cysteine + [acceptor protein]-L-lysine = [E2 ubiquitin-conjugating enzyme]-L-cysteine + N(6)-ubiquitinyl-[acceptor protein]-L-lysine.</text>
        <dbReference type="EC" id="2.3.2.27"/>
    </reaction>
</comment>
<comment type="pathway">
    <text evidence="1">Protein modification; protein ubiquitination.</text>
</comment>
<comment type="subcellular location">
    <subcellularLocation>
        <location evidence="1">Cytoplasm</location>
    </subcellularLocation>
</comment>
<protein>
    <recommendedName>
        <fullName>RING finger protein 39</fullName>
        <ecNumber evidence="1">2.3.2.27</ecNumber>
    </recommendedName>
</protein>
<sequence length="420" mass="45420">MSWRDLPRLRLWLKTEAIPGEGRKAAKVNAGVGEKGIYTASSRGGPPSARSKAVAVVAQGAASRSRLSMDAPELGPGLVERLEQLATCPLCGGSFEDPVLLACEHSFCRACLARRWGTPPATDTEASPTACPCCGLPCPRRSLRSNVRLAVEVRISRELREKLAEPGARAGRRRGGRIPTMGCLDPPGEDMRKTWRRFEVPTPKSSKSEDDLPEDYPVVKNMLHRLTADLTLDPGTAHRRLLISADRRSVQLAPPGTPAPPDGPKRFDQLPAVLGAQGFGAGRHCWEVETADAASCRDSSGEDEDDEESHYAVGAAGESVQRKGCVRLCPAGAVWAVEGRGGRLWALTAPEPTLLGGAEPPPRRIRVDLDWERGRVAFYDGRSLDLLYAFQASVPLGERIFPLFCTCDPRAPLRIVPAES</sequence>